<proteinExistence type="evidence at transcript level"/>
<organism>
    <name type="scientific">Pichia angusta</name>
    <name type="common">Yeast</name>
    <name type="synonym">Hansenula polymorpha</name>
    <dbReference type="NCBI Taxonomy" id="870730"/>
    <lineage>
        <taxon>Eukaryota</taxon>
        <taxon>Fungi</taxon>
        <taxon>Dikarya</taxon>
        <taxon>Ascomycota</taxon>
        <taxon>Saccharomycotina</taxon>
        <taxon>Pichiomycetes</taxon>
        <taxon>Pichiales</taxon>
        <taxon>Pichiaceae</taxon>
        <taxon>Ogataea</taxon>
    </lineage>
</organism>
<name>ATG8_PICAN</name>
<keyword id="KW-0072">Autophagy</keyword>
<keyword id="KW-0968">Cytoplasmic vesicle</keyword>
<keyword id="KW-0449">Lipoprotein</keyword>
<keyword id="KW-0472">Membrane</keyword>
<keyword id="KW-0653">Protein transport</keyword>
<keyword id="KW-0813">Transport</keyword>
<keyword id="KW-0833">Ubl conjugation pathway</keyword>
<keyword id="KW-0926">Vacuole</keyword>
<reference key="1">
    <citation type="journal article" date="2005" name="Traffic">
        <title>Atg8 is essential for macropexophagy in Hansenula polymorpha.</title>
        <authorList>
            <person name="Monastyrska I."/>
            <person name="van der Heide M."/>
            <person name="Krikken A.M."/>
            <person name="Kiel J.A.K.W."/>
            <person name="van der Klei I.J."/>
            <person name="Veenhuis M."/>
        </authorList>
    </citation>
    <scope>NUCLEOTIDE SEQUENCE [GENOMIC DNA]</scope>
    <scope>FUNCTION</scope>
    <scope>SUBCELLULAR LOCATION</scope>
    <source>
        <strain>ATCC 34438 / CBS 4732 / DSM 70277 / JCM 3621 / NBRC 1476 / NRRL Y-5445</strain>
    </source>
</reference>
<reference key="2">
    <citation type="journal article" date="2010" name="BMC Genomics">
        <title>Adaptation of Hansenula polymorpha to methanol: a transcriptome analysis.</title>
        <authorList>
            <person name="van Zutphen T."/>
            <person name="Baerends R.J."/>
            <person name="Susanna K.A."/>
            <person name="de Jong A."/>
            <person name="Kuipers O.P."/>
            <person name="Veenhuis M."/>
            <person name="van der Klei I.J."/>
        </authorList>
    </citation>
    <scope>INDUCTION</scope>
</reference>
<accession>Q5QFG1</accession>
<sequence length="125" mass="14625">MRSQFKDEHPFERRKAEASRIRGKFLDRIPVICEKVEESDIPEIDKRKYLVPSDLTVGQFVYVIRKRIQLPSEKAIFIFVNDILPPTASLMSTIYEQYKDEDGFLYILYSGENTFGQLEGVEETL</sequence>
<protein>
    <recommendedName>
        <fullName>Autophagy-related protein 8</fullName>
    </recommendedName>
    <alternativeName>
        <fullName>Autophagy-related ubiquitin-like modifier ATG8</fullName>
    </alternativeName>
</protein>
<dbReference type="EMBL" id="AY619720">
    <property type="protein sequence ID" value="AAU04437.1"/>
    <property type="molecule type" value="Genomic_DNA"/>
</dbReference>
<dbReference type="SMR" id="Q5QFG1"/>
<dbReference type="GO" id="GO:0000421">
    <property type="term" value="C:autophagosome membrane"/>
    <property type="evidence" value="ECO:0007669"/>
    <property type="project" value="UniProtKB-SubCell"/>
</dbReference>
<dbReference type="GO" id="GO:0031410">
    <property type="term" value="C:cytoplasmic vesicle"/>
    <property type="evidence" value="ECO:0007669"/>
    <property type="project" value="UniProtKB-KW"/>
</dbReference>
<dbReference type="GO" id="GO:0006914">
    <property type="term" value="P:autophagy"/>
    <property type="evidence" value="ECO:0007669"/>
    <property type="project" value="UniProtKB-KW"/>
</dbReference>
<dbReference type="GO" id="GO:0015031">
    <property type="term" value="P:protein transport"/>
    <property type="evidence" value="ECO:0007669"/>
    <property type="project" value="UniProtKB-KW"/>
</dbReference>
<dbReference type="CDD" id="cd16128">
    <property type="entry name" value="Ubl_ATG8"/>
    <property type="match status" value="1"/>
</dbReference>
<dbReference type="FunFam" id="3.10.20.90:FF:000010">
    <property type="entry name" value="Autophagy-related protein"/>
    <property type="match status" value="1"/>
</dbReference>
<dbReference type="Gene3D" id="3.10.20.90">
    <property type="entry name" value="Phosphatidylinositol 3-kinase Catalytic Subunit, Chain A, domain 1"/>
    <property type="match status" value="1"/>
</dbReference>
<dbReference type="InterPro" id="IPR004241">
    <property type="entry name" value="Atg8-like"/>
</dbReference>
<dbReference type="InterPro" id="IPR029071">
    <property type="entry name" value="Ubiquitin-like_domsf"/>
</dbReference>
<dbReference type="PANTHER" id="PTHR10969">
    <property type="entry name" value="MICROTUBULE-ASSOCIATED PROTEINS 1A/1B LIGHT CHAIN 3-RELATED"/>
    <property type="match status" value="1"/>
</dbReference>
<dbReference type="Pfam" id="PF02991">
    <property type="entry name" value="ATG8"/>
    <property type="match status" value="1"/>
</dbReference>
<dbReference type="SUPFAM" id="SSF54236">
    <property type="entry name" value="Ubiquitin-like"/>
    <property type="match status" value="1"/>
</dbReference>
<comment type="function">
    <text evidence="1 2">Ubiquitin-like modifier involved in autophagosome formation. With ATG4, mediates the delivery of the autophagosomes to the vacuole via the microtubule cytoskeleton. Required for selective autophagic degradation of the nucleus (nucleophagy) as well as for mitophagy which contributes to regulate mitochondrial quantity and quality by eliminating the mitochondria to a basal level to fulfill cellular energy requirements and preventing excess ROS production. Participates also in membrane fusion events that take place in the early secretory pathway. Also involved in endoplasmic reticulum-specific autophagic process and is essential for the survival of cells subjected to severe ER stress. The ATG8-PE conjugate mediates tethering between adjacent membranes and stimulates membrane hemifusion, leading to expansion of the autophagosomal membrane during autophagy.</text>
</comment>
<comment type="subcellular location">
    <subcellularLocation>
        <location evidence="2">Cytoplasmic vesicle</location>
        <location evidence="2">Autophagosome membrane</location>
        <topology evidence="2">Lipid-anchor</topology>
    </subcellularLocation>
    <subcellularLocation>
        <location evidence="1">Vacuole membrane</location>
        <topology evidence="1">Lipid-anchor</topology>
    </subcellularLocation>
</comment>
<comment type="induction">
    <text evidence="3">Expression is increased after the shift of cells from glucose to methanol.</text>
</comment>
<comment type="PTM">
    <text evidence="1">The last C-terminal 9 residues are removed to expose Gly-116 at the C-terminus. The C-terminal Gly is then amidated with phosphatidylethanolamine by an activating system similar to that for ubiquitine.</text>
</comment>
<comment type="similarity">
    <text evidence="4">Belongs to the ATG8 family.</text>
</comment>
<evidence type="ECO:0000250" key="1">
    <source>
        <dbReference type="UniProtKB" id="P38182"/>
    </source>
</evidence>
<evidence type="ECO:0000269" key="2">
    <source>
    </source>
</evidence>
<evidence type="ECO:0000269" key="3">
    <source>
    </source>
</evidence>
<evidence type="ECO:0000305" key="4"/>
<feature type="chain" id="PRO_0000017230" description="Autophagy-related protein 8">
    <location>
        <begin position="1"/>
        <end position="116"/>
    </location>
</feature>
<feature type="propeptide" id="PRO_0000017231" description="Removed in mature form" evidence="1">
    <location>
        <begin position="117"/>
        <end position="125"/>
    </location>
</feature>
<feature type="site" description="Cleavage; by ATG4" evidence="1">
    <location>
        <begin position="116"/>
        <end position="117"/>
    </location>
</feature>
<feature type="lipid moiety-binding region" description="Phosphatidylethanolamine amidated glycine" evidence="1">
    <location>
        <position position="116"/>
    </location>
</feature>
<gene>
    <name type="primary">ATG8</name>
</gene>